<keyword id="KW-0131">Cell cycle</keyword>
<keyword id="KW-0132">Cell division</keyword>
<keyword id="KW-0965">Cell junction</keyword>
<keyword id="KW-0175">Coiled coil</keyword>
<keyword id="KW-0963">Cytoplasm</keyword>
<keyword id="KW-0206">Cytoskeleton</keyword>
<keyword id="KW-0303">Gap junction</keyword>
<keyword id="KW-0597">Phosphoprotein</keyword>
<keyword id="KW-1185">Reference proteome</keyword>
<accession>Q2KNA1</accession>
<sequence length="1117" mass="124561">MKKASRSVGSVPKVSAISKTQTAEKIKPENSSSASTGGKLVKPGTAASLSKTKSSDDLLAGMAGGVTVTNGVKGKKSTCPSAAPSASAPAMTTVENKSKISTGTASSTKRNTSTGNKESSSTRERLRERTRLNQSKKLPSAGQGANDMALAKRSRSRTATECDVRMSKSKSDNQISDRAALEAKVKDLLTLAKTKDVEILHLRNELRDMRAQLGINEDHSEGDEKSEKETIMAHQPTDVESTLLQLQEQNTAIREELNQLKNENRMLKDRLNALGFSLEQRLDNSEKLFGYQSLSPEITPGNQSDGGGTLTSSVEGSAPGSVEDLLSQDENTLMDHQHSNSMDNLDSECSEVYQPLTSSDDALDAPSSSESEGIPSIERSRKGSSGNASEVSVACLTERIHQMEENQHSTSEELQATLQELADLQQITQELNSENERLGEEKVILMESLCQQSDKLEHFSRQIEYFRSLLDEHHISYVIDEDVKSGRYMELEQRYMDLAENARFEREQLLGVQQHLSNTLKMAEQDNKEAQEMIGALKERSHHMERIIESEQKGKAALAATLEEYKATVASDQIEMNRLKAQLENEKQKVAELYSIHNSGDKSDIQDLLESVRLDKEKAETLASSLQEDLAHTRNDANRLQDAIAKVEDEYRAFQEEAKKQIEDLNMTLEKLRSDLDEKETERSDMKETIFELEDEVEQHRAVKLHDNLIISDLENTVKKLQDQKHDMEREIKTLHRRLREESAEWRQFQADLQTAVVIANDIKSEAQEEIGDLKRRLHEAQEKNEKLTKELEEIKSRKQEEERGRVYNYMNAVERDLAALRQGMGLSRRSSTSSEPTPTVKTLIKSFDSASQVPNPAAAAIPRTPLSPSPMKTPPAAAVSPMQRHSISGPISTSKPLTALSDKRPNYGEIPVQEHLLRTSSASRPASLPRGPAMESAKTLSVSRRSSEEMKRDISAQEGASPASLMAMGTTSPQLSLSSSPTASVTPTTRSRIREERKDPLSALAREYGGSKRNALLKWCQKKTEGYQNIDITNFSSSWNDGLAFCALLHTYLPAHIPYQELNSQDKRRNFMLAFQAAESVGIKSTLDINEMVRTERPDWQNVMLYVTAIYKYFET</sequence>
<proteinExistence type="evidence at transcript level"/>
<feature type="chain" id="PRO_0000231020" description="Cytospin-A">
    <location>
        <begin position="1"/>
        <end position="1117"/>
    </location>
</feature>
<feature type="domain" description="Calponin-homology (CH)" evidence="5">
    <location>
        <begin position="1011"/>
        <end position="1116"/>
    </location>
</feature>
<feature type="region of interest" description="Disordered" evidence="6">
    <location>
        <begin position="1"/>
        <end position="176"/>
    </location>
</feature>
<feature type="region of interest" description="Disordered" evidence="6">
    <location>
        <begin position="293"/>
        <end position="323"/>
    </location>
</feature>
<feature type="region of interest" description="Disordered" evidence="6">
    <location>
        <begin position="358"/>
        <end position="390"/>
    </location>
</feature>
<feature type="region of interest" description="Disordered" evidence="6">
    <location>
        <begin position="919"/>
        <end position="1001"/>
    </location>
</feature>
<feature type="coiled-coil region" evidence="4">
    <location>
        <begin position="168"/>
        <end position="280"/>
    </location>
</feature>
<feature type="coiled-coil region" evidence="4">
    <location>
        <begin position="394"/>
        <end position="449"/>
    </location>
</feature>
<feature type="coiled-coil region" evidence="4">
    <location>
        <begin position="487"/>
        <end position="807"/>
    </location>
</feature>
<feature type="compositionally biased region" description="Low complexity" evidence="6">
    <location>
        <begin position="45"/>
        <end position="90"/>
    </location>
</feature>
<feature type="compositionally biased region" description="Polar residues" evidence="6">
    <location>
        <begin position="93"/>
        <end position="117"/>
    </location>
</feature>
<feature type="compositionally biased region" description="Basic and acidic residues" evidence="6">
    <location>
        <begin position="120"/>
        <end position="131"/>
    </location>
</feature>
<feature type="compositionally biased region" description="Basic and acidic residues" evidence="6">
    <location>
        <begin position="158"/>
        <end position="171"/>
    </location>
</feature>
<feature type="compositionally biased region" description="Polar residues" evidence="6">
    <location>
        <begin position="293"/>
        <end position="303"/>
    </location>
</feature>
<feature type="compositionally biased region" description="Low complexity" evidence="6">
    <location>
        <begin position="358"/>
        <end position="377"/>
    </location>
</feature>
<feature type="compositionally biased region" description="Basic and acidic residues" evidence="6">
    <location>
        <begin position="946"/>
        <end position="956"/>
    </location>
</feature>
<feature type="compositionally biased region" description="Low complexity" evidence="6">
    <location>
        <begin position="971"/>
        <end position="990"/>
    </location>
</feature>
<feature type="modified residue" description="Phosphoserine" evidence="2">
    <location>
        <position position="384"/>
    </location>
</feature>
<feature type="modified residue" description="Phosphoserine" evidence="2">
    <location>
        <position position="385"/>
    </location>
</feature>
<feature type="modified residue" description="Phosphoserine" evidence="2">
    <location>
        <position position="389"/>
    </location>
</feature>
<feature type="modified residue" description="Phosphoserine" evidence="3">
    <location>
        <position position="868"/>
    </location>
</feature>
<feature type="modified residue" description="Phosphoserine" evidence="3">
    <location>
        <position position="881"/>
    </location>
</feature>
<feature type="modified residue" description="Phosphoserine" evidence="3">
    <location>
        <position position="887"/>
    </location>
</feature>
<gene>
    <name type="primary">SPECC1L</name>
    <name type="synonym">CYTSA</name>
</gene>
<reference key="1">
    <citation type="submission" date="2005-01" db="EMBL/GenBank/DDBJ databases">
        <title>Characterization of cytospin A as a multiple coiled coil protein involved in cytokinesis and spindle organization.</title>
        <authorList>
            <person name="Huang C.-H."/>
            <person name="Ye T."/>
            <person name="Chen Y."/>
        </authorList>
    </citation>
    <scope>NUCLEOTIDE SEQUENCE [MRNA]</scope>
</reference>
<protein>
    <recommendedName>
        <fullName>Cytospin-A</fullName>
    </recommendedName>
    <alternativeName>
        <fullName>SPECC1-like protein</fullName>
    </alternativeName>
    <alternativeName>
        <fullName>Sperm antigen with calponin homology and coiled-coil domains 1-like</fullName>
    </alternativeName>
</protein>
<name>CYTSA_PANTR</name>
<comment type="function">
    <text evidence="1">Involved in cytokinesis and spindle organization. May play a role in actin cytoskeleton organization and microtubule stabilization and hence required for proper cell adhesion and migration (By similarity).</text>
</comment>
<comment type="subunit">
    <text evidence="1">May interact with both microtubules and actin cytoskeleton.</text>
</comment>
<comment type="subcellular location">
    <subcellularLocation>
        <location evidence="1">Cytoplasm</location>
        <location evidence="1">Cytoskeleton</location>
    </subcellularLocation>
    <subcellularLocation>
        <location evidence="1">Cytoplasm</location>
        <location evidence="1">Cytoskeleton</location>
        <location evidence="1">Spindle</location>
    </subcellularLocation>
    <subcellularLocation>
        <location evidence="1">Cell junction</location>
        <location evidence="1">Gap junction</location>
    </subcellularLocation>
    <text evidence="1">Colocalizes with beta-tubulin, acetylated alpha-tubulin and F-actin. Also observed in a ring around gamma-tubulin containing centrioles possibly in the microtubule organizing center (By similarity).</text>
</comment>
<comment type="similarity">
    <text evidence="7">Belongs to the cytospin-A family.</text>
</comment>
<organism>
    <name type="scientific">Pan troglodytes</name>
    <name type="common">Chimpanzee</name>
    <dbReference type="NCBI Taxonomy" id="9598"/>
    <lineage>
        <taxon>Eukaryota</taxon>
        <taxon>Metazoa</taxon>
        <taxon>Chordata</taxon>
        <taxon>Craniata</taxon>
        <taxon>Vertebrata</taxon>
        <taxon>Euteleostomi</taxon>
        <taxon>Mammalia</taxon>
        <taxon>Eutheria</taxon>
        <taxon>Euarchontoglires</taxon>
        <taxon>Primates</taxon>
        <taxon>Haplorrhini</taxon>
        <taxon>Catarrhini</taxon>
        <taxon>Hominidae</taxon>
        <taxon>Pan</taxon>
    </lineage>
</organism>
<evidence type="ECO:0000250" key="1"/>
<evidence type="ECO:0000250" key="2">
    <source>
        <dbReference type="UniProtKB" id="Q2KN98"/>
    </source>
</evidence>
<evidence type="ECO:0000250" key="3">
    <source>
        <dbReference type="UniProtKB" id="Q69YQ0"/>
    </source>
</evidence>
<evidence type="ECO:0000255" key="4"/>
<evidence type="ECO:0000255" key="5">
    <source>
        <dbReference type="PROSITE-ProRule" id="PRU00044"/>
    </source>
</evidence>
<evidence type="ECO:0000256" key="6">
    <source>
        <dbReference type="SAM" id="MobiDB-lite"/>
    </source>
</evidence>
<evidence type="ECO:0000305" key="7"/>
<dbReference type="EMBL" id="AY884294">
    <property type="protein sequence ID" value="AAX84185.1"/>
    <property type="molecule type" value="mRNA"/>
</dbReference>
<dbReference type="RefSeq" id="NP_001035052.1">
    <property type="nucleotide sequence ID" value="NM_001039963.1"/>
</dbReference>
<dbReference type="SMR" id="Q2KNA1"/>
<dbReference type="FunCoup" id="Q2KNA1">
    <property type="interactions" value="1550"/>
</dbReference>
<dbReference type="STRING" id="9598.ENSPTRP00000087919"/>
<dbReference type="PaxDb" id="9598-ENSPTRP00000059318"/>
<dbReference type="GeneID" id="458713"/>
<dbReference type="CTD" id="23384"/>
<dbReference type="eggNOG" id="KOG4678">
    <property type="taxonomic scope" value="Eukaryota"/>
</dbReference>
<dbReference type="InParanoid" id="Q2KNA1"/>
<dbReference type="Proteomes" id="UP000002277">
    <property type="component" value="Unplaced"/>
</dbReference>
<dbReference type="GO" id="GO:0005737">
    <property type="term" value="C:cytoplasm"/>
    <property type="evidence" value="ECO:0007669"/>
    <property type="project" value="UniProtKB-KW"/>
</dbReference>
<dbReference type="GO" id="GO:0031941">
    <property type="term" value="C:filamentous actin"/>
    <property type="evidence" value="ECO:0000318"/>
    <property type="project" value="GO_Central"/>
</dbReference>
<dbReference type="GO" id="GO:0005921">
    <property type="term" value="C:gap junction"/>
    <property type="evidence" value="ECO:0007669"/>
    <property type="project" value="UniProtKB-SubCell"/>
</dbReference>
<dbReference type="GO" id="GO:0005815">
    <property type="term" value="C:microtubule organizing center"/>
    <property type="evidence" value="ECO:0000318"/>
    <property type="project" value="GO_Central"/>
</dbReference>
<dbReference type="GO" id="GO:0005819">
    <property type="term" value="C:spindle"/>
    <property type="evidence" value="ECO:0007669"/>
    <property type="project" value="UniProtKB-SubCell"/>
</dbReference>
<dbReference type="GO" id="GO:0030036">
    <property type="term" value="P:actin cytoskeleton organization"/>
    <property type="evidence" value="ECO:0000318"/>
    <property type="project" value="GO_Central"/>
</dbReference>
<dbReference type="GO" id="GO:0051301">
    <property type="term" value="P:cell division"/>
    <property type="evidence" value="ECO:0007669"/>
    <property type="project" value="UniProtKB-KW"/>
</dbReference>
<dbReference type="CDD" id="cd21199">
    <property type="entry name" value="CH_CYTS"/>
    <property type="match status" value="1"/>
</dbReference>
<dbReference type="FunFam" id="1.10.418.10:FF:000020">
    <property type="entry name" value="Cytospin-A isoform 1"/>
    <property type="match status" value="1"/>
</dbReference>
<dbReference type="Gene3D" id="1.10.418.10">
    <property type="entry name" value="Calponin-like domain"/>
    <property type="match status" value="1"/>
</dbReference>
<dbReference type="InterPro" id="IPR001715">
    <property type="entry name" value="CH_dom"/>
</dbReference>
<dbReference type="InterPro" id="IPR036872">
    <property type="entry name" value="CH_dom_sf"/>
</dbReference>
<dbReference type="InterPro" id="IPR050540">
    <property type="entry name" value="F-actin_Monoox_Mical"/>
</dbReference>
<dbReference type="PANTHER" id="PTHR23167">
    <property type="entry name" value="CALPONIN HOMOLOGY DOMAIN-CONTAINING PROTEIN DDB_G0272472-RELATED"/>
    <property type="match status" value="1"/>
</dbReference>
<dbReference type="PANTHER" id="PTHR23167:SF18">
    <property type="entry name" value="CYTOSPIN-A"/>
    <property type="match status" value="1"/>
</dbReference>
<dbReference type="Pfam" id="PF00307">
    <property type="entry name" value="CH"/>
    <property type="match status" value="1"/>
</dbReference>
<dbReference type="SMART" id="SM00033">
    <property type="entry name" value="CH"/>
    <property type="match status" value="1"/>
</dbReference>
<dbReference type="SUPFAM" id="SSF47576">
    <property type="entry name" value="Calponin-homology domain, CH-domain"/>
    <property type="match status" value="1"/>
</dbReference>
<dbReference type="PROSITE" id="PS50021">
    <property type="entry name" value="CH"/>
    <property type="match status" value="1"/>
</dbReference>